<evidence type="ECO:0000255" key="1">
    <source>
        <dbReference type="HAMAP-Rule" id="MF_01315"/>
    </source>
</evidence>
<evidence type="ECO:0000256" key="2">
    <source>
        <dbReference type="SAM" id="MobiDB-lite"/>
    </source>
</evidence>
<evidence type="ECO:0000305" key="3"/>
<sequence length="121" mass="13876">MVRIAGVNVPDRKHAVVALMSIYGIGKSRARSICLNTGIDEHVQLCKLSEIHIDKLRDAVDEYIVEGDLRREVTLNIKRLIDLGTYRGLRHRRNLPVRGQRTRTNARTCKGPRKSMNKQFK</sequence>
<organism>
    <name type="scientific">Blochmanniella pennsylvanica (strain BPEN)</name>
    <dbReference type="NCBI Taxonomy" id="291272"/>
    <lineage>
        <taxon>Bacteria</taxon>
        <taxon>Pseudomonadati</taxon>
        <taxon>Pseudomonadota</taxon>
        <taxon>Gammaproteobacteria</taxon>
        <taxon>Enterobacterales</taxon>
        <taxon>Enterobacteriaceae</taxon>
        <taxon>ant endosymbionts</taxon>
        <taxon>Candidatus Blochmanniella</taxon>
    </lineage>
</organism>
<gene>
    <name evidence="1" type="primary">rpsM</name>
    <name type="ordered locus">BPEN_220</name>
</gene>
<dbReference type="EMBL" id="CP000016">
    <property type="protein sequence ID" value="AAZ40853.1"/>
    <property type="molecule type" value="Genomic_DNA"/>
</dbReference>
<dbReference type="RefSeq" id="WP_011282760.1">
    <property type="nucleotide sequence ID" value="NC_007292.1"/>
</dbReference>
<dbReference type="SMR" id="Q493I7"/>
<dbReference type="STRING" id="291272.BPEN_220"/>
<dbReference type="KEGG" id="bpn:BPEN_220"/>
<dbReference type="eggNOG" id="COG0099">
    <property type="taxonomic scope" value="Bacteria"/>
</dbReference>
<dbReference type="HOGENOM" id="CLU_103849_1_2_6"/>
<dbReference type="OrthoDB" id="9803610at2"/>
<dbReference type="Proteomes" id="UP000007794">
    <property type="component" value="Chromosome"/>
</dbReference>
<dbReference type="GO" id="GO:0005829">
    <property type="term" value="C:cytosol"/>
    <property type="evidence" value="ECO:0007669"/>
    <property type="project" value="TreeGrafter"/>
</dbReference>
<dbReference type="GO" id="GO:0015935">
    <property type="term" value="C:small ribosomal subunit"/>
    <property type="evidence" value="ECO:0007669"/>
    <property type="project" value="TreeGrafter"/>
</dbReference>
<dbReference type="GO" id="GO:0019843">
    <property type="term" value="F:rRNA binding"/>
    <property type="evidence" value="ECO:0007669"/>
    <property type="project" value="UniProtKB-UniRule"/>
</dbReference>
<dbReference type="GO" id="GO:0003735">
    <property type="term" value="F:structural constituent of ribosome"/>
    <property type="evidence" value="ECO:0007669"/>
    <property type="project" value="InterPro"/>
</dbReference>
<dbReference type="GO" id="GO:0000049">
    <property type="term" value="F:tRNA binding"/>
    <property type="evidence" value="ECO:0007669"/>
    <property type="project" value="UniProtKB-UniRule"/>
</dbReference>
<dbReference type="GO" id="GO:0006412">
    <property type="term" value="P:translation"/>
    <property type="evidence" value="ECO:0007669"/>
    <property type="project" value="UniProtKB-UniRule"/>
</dbReference>
<dbReference type="FunFam" id="1.10.8.50:FF:000001">
    <property type="entry name" value="30S ribosomal protein S13"/>
    <property type="match status" value="1"/>
</dbReference>
<dbReference type="FunFam" id="4.10.910.10:FF:000001">
    <property type="entry name" value="30S ribosomal protein S13"/>
    <property type="match status" value="1"/>
</dbReference>
<dbReference type="Gene3D" id="1.10.8.50">
    <property type="match status" value="1"/>
</dbReference>
<dbReference type="Gene3D" id="4.10.910.10">
    <property type="entry name" value="30s ribosomal protein s13, domain 2"/>
    <property type="match status" value="1"/>
</dbReference>
<dbReference type="HAMAP" id="MF_01315">
    <property type="entry name" value="Ribosomal_uS13"/>
    <property type="match status" value="1"/>
</dbReference>
<dbReference type="InterPro" id="IPR027437">
    <property type="entry name" value="Rbsml_uS13_C"/>
</dbReference>
<dbReference type="InterPro" id="IPR001892">
    <property type="entry name" value="Ribosomal_uS13"/>
</dbReference>
<dbReference type="InterPro" id="IPR010979">
    <property type="entry name" value="Ribosomal_uS13-like_H2TH"/>
</dbReference>
<dbReference type="InterPro" id="IPR019980">
    <property type="entry name" value="Ribosomal_uS13_bac-type"/>
</dbReference>
<dbReference type="InterPro" id="IPR018269">
    <property type="entry name" value="Ribosomal_uS13_CS"/>
</dbReference>
<dbReference type="NCBIfam" id="TIGR03631">
    <property type="entry name" value="uS13_bact"/>
    <property type="match status" value="1"/>
</dbReference>
<dbReference type="PANTHER" id="PTHR10871">
    <property type="entry name" value="30S RIBOSOMAL PROTEIN S13/40S RIBOSOMAL PROTEIN S18"/>
    <property type="match status" value="1"/>
</dbReference>
<dbReference type="PANTHER" id="PTHR10871:SF1">
    <property type="entry name" value="SMALL RIBOSOMAL SUBUNIT PROTEIN US13M"/>
    <property type="match status" value="1"/>
</dbReference>
<dbReference type="Pfam" id="PF00416">
    <property type="entry name" value="Ribosomal_S13"/>
    <property type="match status" value="1"/>
</dbReference>
<dbReference type="PIRSF" id="PIRSF002134">
    <property type="entry name" value="Ribosomal_S13"/>
    <property type="match status" value="1"/>
</dbReference>
<dbReference type="SUPFAM" id="SSF46946">
    <property type="entry name" value="S13-like H2TH domain"/>
    <property type="match status" value="1"/>
</dbReference>
<dbReference type="PROSITE" id="PS00646">
    <property type="entry name" value="RIBOSOMAL_S13_1"/>
    <property type="match status" value="1"/>
</dbReference>
<dbReference type="PROSITE" id="PS50159">
    <property type="entry name" value="RIBOSOMAL_S13_2"/>
    <property type="match status" value="1"/>
</dbReference>
<keyword id="KW-1185">Reference proteome</keyword>
<keyword id="KW-0687">Ribonucleoprotein</keyword>
<keyword id="KW-0689">Ribosomal protein</keyword>
<keyword id="KW-0694">RNA-binding</keyword>
<keyword id="KW-0699">rRNA-binding</keyword>
<keyword id="KW-0820">tRNA-binding</keyword>
<accession>Q493I7</accession>
<protein>
    <recommendedName>
        <fullName evidence="1">Small ribosomal subunit protein uS13</fullName>
    </recommendedName>
    <alternativeName>
        <fullName evidence="3">30S ribosomal protein S13</fullName>
    </alternativeName>
</protein>
<name>RS13_BLOPB</name>
<comment type="function">
    <text evidence="1">Located at the top of the head of the 30S subunit, it contacts several helices of the 16S rRNA. In the 70S ribosome it contacts the 23S rRNA (bridge B1a) and protein L5 of the 50S subunit (bridge B1b), connecting the 2 subunits; these bridges are implicated in subunit movement. Contacts the tRNAs in the A and P-sites.</text>
</comment>
<comment type="subunit">
    <text evidence="1">Part of the 30S ribosomal subunit. Forms a loose heterodimer with protein S19. Forms two bridges to the 50S subunit in the 70S ribosome.</text>
</comment>
<comment type="similarity">
    <text evidence="1">Belongs to the universal ribosomal protein uS13 family.</text>
</comment>
<proteinExistence type="inferred from homology"/>
<feature type="chain" id="PRO_0000230477" description="Small ribosomal subunit protein uS13">
    <location>
        <begin position="1"/>
        <end position="121"/>
    </location>
</feature>
<feature type="region of interest" description="Disordered" evidence="2">
    <location>
        <begin position="93"/>
        <end position="121"/>
    </location>
</feature>
<feature type="compositionally biased region" description="Basic residues" evidence="2">
    <location>
        <begin position="110"/>
        <end position="121"/>
    </location>
</feature>
<reference key="1">
    <citation type="journal article" date="2005" name="Genome Res.">
        <title>Genome sequence of Blochmannia pennsylvanicus indicates parallel evolutionary trends among bacterial mutualists of insects.</title>
        <authorList>
            <person name="Degnan P.H."/>
            <person name="Lazarus A.B."/>
            <person name="Wernegreen J.J."/>
        </authorList>
    </citation>
    <scope>NUCLEOTIDE SEQUENCE [LARGE SCALE GENOMIC DNA]</scope>
    <source>
        <strain>BPEN</strain>
    </source>
</reference>